<evidence type="ECO:0000250" key="1">
    <source>
        <dbReference type="UniProtKB" id="Q2XPP4"/>
    </source>
</evidence>
<evidence type="ECO:0000250" key="2">
    <source>
        <dbReference type="UniProtKB" id="Q8BGE6"/>
    </source>
</evidence>
<evidence type="ECO:0000250" key="3">
    <source>
        <dbReference type="UniProtKB" id="Q9Y4P1"/>
    </source>
</evidence>
<evidence type="ECO:0000256" key="4">
    <source>
        <dbReference type="SAM" id="MobiDB-lite"/>
    </source>
</evidence>
<evidence type="ECO:0000269" key="5">
    <source>
    </source>
</evidence>
<evidence type="ECO:0000269" key="6">
    <source>
    </source>
</evidence>
<evidence type="ECO:0000303" key="7">
    <source>
    </source>
</evidence>
<evidence type="ECO:0000303" key="8">
    <source ref="4"/>
</evidence>
<evidence type="ECO:0000305" key="9"/>
<reference key="1">
    <citation type="journal article" date="2002" name="Plant Physiol.">
        <title>Leaf senescence and starvation-induced chlorosis are accelerated by the disruption of an Arabidopsis autophagy gene.</title>
        <authorList>
            <person name="Hanaoka H."/>
            <person name="Noda T."/>
            <person name="Shirano Y."/>
            <person name="Kato T."/>
            <person name="Hayashi H."/>
            <person name="Shibata D."/>
            <person name="Tabata S."/>
            <person name="Ohsumi Y."/>
        </authorList>
    </citation>
    <scope>NUCLEOTIDE SEQUENCE [MRNA] (ISOFORM 1)</scope>
    <scope>NOMENCLATURE</scope>
    <scope>GENE FAMILY</scope>
</reference>
<reference key="2">
    <citation type="journal article" date="2000" name="Nature">
        <title>Sequence and analysis of chromosome 3 of the plant Arabidopsis thaliana.</title>
        <authorList>
            <person name="Salanoubat M."/>
            <person name="Lemcke K."/>
            <person name="Rieger M."/>
            <person name="Ansorge W."/>
            <person name="Unseld M."/>
            <person name="Fartmann B."/>
            <person name="Valle G."/>
            <person name="Bloecker H."/>
            <person name="Perez-Alonso M."/>
            <person name="Obermaier B."/>
            <person name="Delseny M."/>
            <person name="Boutry M."/>
            <person name="Grivell L.A."/>
            <person name="Mache R."/>
            <person name="Puigdomenech P."/>
            <person name="De Simone V."/>
            <person name="Choisne N."/>
            <person name="Artiguenave F."/>
            <person name="Robert C."/>
            <person name="Brottier P."/>
            <person name="Wincker P."/>
            <person name="Cattolico L."/>
            <person name="Weissenbach J."/>
            <person name="Saurin W."/>
            <person name="Quetier F."/>
            <person name="Schaefer M."/>
            <person name="Mueller-Auer S."/>
            <person name="Gabel C."/>
            <person name="Fuchs M."/>
            <person name="Benes V."/>
            <person name="Wurmbach E."/>
            <person name="Drzonek H."/>
            <person name="Erfle H."/>
            <person name="Jordan N."/>
            <person name="Bangert S."/>
            <person name="Wiedelmann R."/>
            <person name="Kranz H."/>
            <person name="Voss H."/>
            <person name="Holland R."/>
            <person name="Brandt P."/>
            <person name="Nyakatura G."/>
            <person name="Vezzi A."/>
            <person name="D'Angelo M."/>
            <person name="Pallavicini A."/>
            <person name="Toppo S."/>
            <person name="Simionati B."/>
            <person name="Conrad A."/>
            <person name="Hornischer K."/>
            <person name="Kauer G."/>
            <person name="Loehnert T.-H."/>
            <person name="Nordsiek G."/>
            <person name="Reichelt J."/>
            <person name="Scharfe M."/>
            <person name="Schoen O."/>
            <person name="Bargues M."/>
            <person name="Terol J."/>
            <person name="Climent J."/>
            <person name="Navarro P."/>
            <person name="Collado C."/>
            <person name="Perez-Perez A."/>
            <person name="Ottenwaelder B."/>
            <person name="Duchemin D."/>
            <person name="Cooke R."/>
            <person name="Laudie M."/>
            <person name="Berger-Llauro C."/>
            <person name="Purnelle B."/>
            <person name="Masuy D."/>
            <person name="de Haan M."/>
            <person name="Maarse A.C."/>
            <person name="Alcaraz J.-P."/>
            <person name="Cottet A."/>
            <person name="Casacuberta E."/>
            <person name="Monfort A."/>
            <person name="Argiriou A."/>
            <person name="Flores M."/>
            <person name="Liguori R."/>
            <person name="Vitale D."/>
            <person name="Mannhaupt G."/>
            <person name="Haase D."/>
            <person name="Schoof H."/>
            <person name="Rudd S."/>
            <person name="Zaccaria P."/>
            <person name="Mewes H.-W."/>
            <person name="Mayer K.F.X."/>
            <person name="Kaul S."/>
            <person name="Town C.D."/>
            <person name="Koo H.L."/>
            <person name="Tallon L.J."/>
            <person name="Jenkins J."/>
            <person name="Rooney T."/>
            <person name="Rizzo M."/>
            <person name="Walts A."/>
            <person name="Utterback T."/>
            <person name="Fujii C.Y."/>
            <person name="Shea T.P."/>
            <person name="Creasy T.H."/>
            <person name="Haas B."/>
            <person name="Maiti R."/>
            <person name="Wu D."/>
            <person name="Peterson J."/>
            <person name="Van Aken S."/>
            <person name="Pai G."/>
            <person name="Militscher J."/>
            <person name="Sellers P."/>
            <person name="Gill J.E."/>
            <person name="Feldblyum T.V."/>
            <person name="Preuss D."/>
            <person name="Lin X."/>
            <person name="Nierman W.C."/>
            <person name="Salzberg S.L."/>
            <person name="White O."/>
            <person name="Venter J.C."/>
            <person name="Fraser C.M."/>
            <person name="Kaneko T."/>
            <person name="Nakamura Y."/>
            <person name="Sato S."/>
            <person name="Kato T."/>
            <person name="Asamizu E."/>
            <person name="Sasamoto S."/>
            <person name="Kimura T."/>
            <person name="Idesawa K."/>
            <person name="Kawashima K."/>
            <person name="Kishida Y."/>
            <person name="Kiyokawa C."/>
            <person name="Kohara M."/>
            <person name="Matsumoto M."/>
            <person name="Matsuno A."/>
            <person name="Muraki A."/>
            <person name="Nakayama S."/>
            <person name="Nakazaki N."/>
            <person name="Shinpo S."/>
            <person name="Takeuchi C."/>
            <person name="Wada T."/>
            <person name="Watanabe A."/>
            <person name="Yamada M."/>
            <person name="Yasuda M."/>
            <person name="Tabata S."/>
        </authorList>
    </citation>
    <scope>NUCLEOTIDE SEQUENCE [LARGE SCALE GENOMIC DNA]</scope>
    <source>
        <strain>cv. Columbia</strain>
    </source>
</reference>
<reference key="3">
    <citation type="journal article" date="2017" name="Plant J.">
        <title>Araport11: a complete reannotation of the Arabidopsis thaliana reference genome.</title>
        <authorList>
            <person name="Cheng C.Y."/>
            <person name="Krishnakumar V."/>
            <person name="Chan A.P."/>
            <person name="Thibaud-Nissen F."/>
            <person name="Schobel S."/>
            <person name="Town C.D."/>
        </authorList>
    </citation>
    <scope>GENOME REANNOTATION</scope>
    <source>
        <strain>cv. Columbia</strain>
    </source>
</reference>
<reference key="4">
    <citation type="submission" date="2006-07" db="EMBL/GenBank/DDBJ databases">
        <title>Large-scale analysis of RIKEN Arabidopsis full-length (RAFL) cDNAs.</title>
        <authorList>
            <person name="Totoki Y."/>
            <person name="Seki M."/>
            <person name="Ishida J."/>
            <person name="Nakajima M."/>
            <person name="Enju A."/>
            <person name="Kamiya A."/>
            <person name="Narusaka M."/>
            <person name="Shin-i T."/>
            <person name="Nakagawa M."/>
            <person name="Sakamoto N."/>
            <person name="Oishi K."/>
            <person name="Kohara Y."/>
            <person name="Kobayashi M."/>
            <person name="Toyoda A."/>
            <person name="Sakaki Y."/>
            <person name="Sakurai T."/>
            <person name="Iida K."/>
            <person name="Akiyama K."/>
            <person name="Satou M."/>
            <person name="Toyoda T."/>
            <person name="Konagaya A."/>
            <person name="Carninci P."/>
            <person name="Kawai J."/>
            <person name="Hayashizaki Y."/>
            <person name="Shinozaki K."/>
        </authorList>
    </citation>
    <scope>NUCLEOTIDE SEQUENCE [LARGE SCALE MRNA] (ISOFORMS 1 AND 2)</scope>
    <source>
        <strain>cv. Columbia</strain>
    </source>
</reference>
<reference key="5">
    <citation type="journal article" date="2004" name="FEBS Lett.">
        <title>Arabidopsis homologues of the autophagy protein Atg8 are a novel family of microtubule binding proteins.</title>
        <authorList>
            <person name="Ketelaar T."/>
            <person name="Voss C."/>
            <person name="Dimmock S.A."/>
            <person name="Thumm M."/>
            <person name="Hussey P.J."/>
        </authorList>
    </citation>
    <scope>INTERACTION WITH ATG8A AND ATG8D</scope>
</reference>
<reference key="6">
    <citation type="journal article" date="2004" name="Plant Cell">
        <title>Processing of ATG8s, ubiquitin-like proteins, and their deconjugation by ATG4s are essential for plant autophagy.</title>
        <authorList>
            <person name="Yoshimoto K."/>
            <person name="Hanaoka H."/>
            <person name="Sato S."/>
            <person name="Kato T."/>
            <person name="Tabata S."/>
            <person name="Noda T."/>
            <person name="Ohsumi Y."/>
        </authorList>
    </citation>
    <scope>TISSUE SPECIFICITY</scope>
</reference>
<dbReference type="EC" id="3.4.22.-" evidence="3"/>
<dbReference type="EMBL" id="AB073172">
    <property type="protein sequence ID" value="BAB88384.1"/>
    <property type="molecule type" value="mRNA"/>
</dbReference>
<dbReference type="EMBL" id="AL138647">
    <property type="protein sequence ID" value="CAB75814.1"/>
    <property type="molecule type" value="Genomic_DNA"/>
</dbReference>
<dbReference type="EMBL" id="CP002686">
    <property type="protein sequence ID" value="AEE79989.1"/>
    <property type="molecule type" value="Genomic_DNA"/>
</dbReference>
<dbReference type="EMBL" id="CP002686">
    <property type="protein sequence ID" value="AEE79990.1"/>
    <property type="molecule type" value="Genomic_DNA"/>
</dbReference>
<dbReference type="EMBL" id="AK226932">
    <property type="protein sequence ID" value="BAE99003.1"/>
    <property type="molecule type" value="mRNA"/>
</dbReference>
<dbReference type="EMBL" id="AK220621">
    <property type="protein sequence ID" value="BAD95023.1"/>
    <property type="molecule type" value="mRNA"/>
</dbReference>
<dbReference type="PIR" id="T47819">
    <property type="entry name" value="T47819"/>
</dbReference>
<dbReference type="RefSeq" id="NP_001118859.1">
    <molecule id="Q9M1Y0-2"/>
    <property type="nucleotide sequence ID" value="NM_001125387.1"/>
</dbReference>
<dbReference type="RefSeq" id="NP_191554.1">
    <molecule id="Q9M1Y0-1"/>
    <property type="nucleotide sequence ID" value="NM_115858.6"/>
</dbReference>
<dbReference type="SMR" id="Q9M1Y0"/>
<dbReference type="FunCoup" id="Q9M1Y0">
    <property type="interactions" value="3829"/>
</dbReference>
<dbReference type="STRING" id="3702.Q9M1Y0"/>
<dbReference type="MEROPS" id="C54.012"/>
<dbReference type="TCDB" id="9.A.15.3.1">
    <property type="family name" value="the autophagy-related phagophore-formation transporter (apt) family"/>
</dbReference>
<dbReference type="iPTMnet" id="Q9M1Y0"/>
<dbReference type="PaxDb" id="3702-AT3G59950.1"/>
<dbReference type="EnsemblPlants" id="AT3G59950.1">
    <molecule id="Q9M1Y0-1"/>
    <property type="protein sequence ID" value="AT3G59950.1"/>
    <property type="gene ID" value="AT3G59950"/>
</dbReference>
<dbReference type="EnsemblPlants" id="AT3G59950.3">
    <molecule id="Q9M1Y0-2"/>
    <property type="protein sequence ID" value="AT3G59950.3"/>
    <property type="gene ID" value="AT3G59950"/>
</dbReference>
<dbReference type="GeneID" id="825165"/>
<dbReference type="Gramene" id="AT3G59950.1">
    <molecule id="Q9M1Y0-1"/>
    <property type="protein sequence ID" value="AT3G59950.1"/>
    <property type="gene ID" value="AT3G59950"/>
</dbReference>
<dbReference type="Gramene" id="AT3G59950.3">
    <molecule id="Q9M1Y0-2"/>
    <property type="protein sequence ID" value="AT3G59950.3"/>
    <property type="gene ID" value="AT3G59950"/>
</dbReference>
<dbReference type="KEGG" id="ath:AT3G59950"/>
<dbReference type="Araport" id="AT3G59950"/>
<dbReference type="TAIR" id="AT3G59950"/>
<dbReference type="eggNOG" id="KOG2674">
    <property type="taxonomic scope" value="Eukaryota"/>
</dbReference>
<dbReference type="HOGENOM" id="CLU_021259_1_0_1"/>
<dbReference type="InParanoid" id="Q9M1Y0"/>
<dbReference type="PhylomeDB" id="Q9M1Y0"/>
<dbReference type="PRO" id="PR:Q9M1Y0"/>
<dbReference type="Proteomes" id="UP000006548">
    <property type="component" value="Chromosome 3"/>
</dbReference>
<dbReference type="ExpressionAtlas" id="Q9M1Y0">
    <property type="expression patterns" value="baseline and differential"/>
</dbReference>
<dbReference type="GO" id="GO:0005737">
    <property type="term" value="C:cytoplasm"/>
    <property type="evidence" value="ECO:0007669"/>
    <property type="project" value="UniProtKB-SubCell"/>
</dbReference>
<dbReference type="GO" id="GO:0008234">
    <property type="term" value="F:cysteine-type peptidase activity"/>
    <property type="evidence" value="ECO:0007669"/>
    <property type="project" value="UniProtKB-KW"/>
</dbReference>
<dbReference type="GO" id="GO:0004175">
    <property type="term" value="F:endopeptidase activity"/>
    <property type="evidence" value="ECO:0000314"/>
    <property type="project" value="TAIR"/>
</dbReference>
<dbReference type="GO" id="GO:0019786">
    <property type="term" value="F:protein-phosphatidylethanolamide deconjugating activity"/>
    <property type="evidence" value="ECO:0007669"/>
    <property type="project" value="InterPro"/>
</dbReference>
<dbReference type="GO" id="GO:0006914">
    <property type="term" value="P:autophagy"/>
    <property type="evidence" value="ECO:0007669"/>
    <property type="project" value="UniProtKB-KW"/>
</dbReference>
<dbReference type="GO" id="GO:0015031">
    <property type="term" value="P:protein transport"/>
    <property type="evidence" value="ECO:0007669"/>
    <property type="project" value="UniProtKB-KW"/>
</dbReference>
<dbReference type="GO" id="GO:0006508">
    <property type="term" value="P:proteolysis"/>
    <property type="evidence" value="ECO:0007669"/>
    <property type="project" value="UniProtKB-KW"/>
</dbReference>
<dbReference type="InterPro" id="IPR038765">
    <property type="entry name" value="Papain-like_cys_pep_sf"/>
</dbReference>
<dbReference type="InterPro" id="IPR005078">
    <property type="entry name" value="Peptidase_C54"/>
</dbReference>
<dbReference type="InterPro" id="IPR046792">
    <property type="entry name" value="Peptidase_C54_cat"/>
</dbReference>
<dbReference type="PANTHER" id="PTHR22624">
    <property type="entry name" value="CYSTEINE PROTEASE ATG4"/>
    <property type="match status" value="1"/>
</dbReference>
<dbReference type="PANTHER" id="PTHR22624:SF54">
    <property type="entry name" value="CYSTEINE PROTEASE ATG4B"/>
    <property type="match status" value="1"/>
</dbReference>
<dbReference type="Pfam" id="PF03416">
    <property type="entry name" value="Peptidase_C54"/>
    <property type="match status" value="1"/>
</dbReference>
<dbReference type="SUPFAM" id="SSF54001">
    <property type="entry name" value="Cysteine proteinases"/>
    <property type="match status" value="1"/>
</dbReference>
<keyword id="KW-0025">Alternative splicing</keyword>
<keyword id="KW-0072">Autophagy</keyword>
<keyword id="KW-0963">Cytoplasm</keyword>
<keyword id="KW-0378">Hydrolase</keyword>
<keyword id="KW-0645">Protease</keyword>
<keyword id="KW-0653">Protein transport</keyword>
<keyword id="KW-1185">Reference proteome</keyword>
<keyword id="KW-0788">Thiol protease</keyword>
<keyword id="KW-0813">Transport</keyword>
<keyword id="KW-0833">Ubl conjugation pathway</keyword>
<gene>
    <name evidence="7" type="primary">ATG4B</name>
    <name evidence="7" type="synonym">APG4B</name>
    <name type="ordered locus">At3g59950</name>
    <name type="ORF">F24G16.220</name>
</gene>
<comment type="function">
    <text evidence="1 3">Cysteine protease that plays a key role in autophagy by mediating both proteolytic activation and delipidation of ATG8 family proteins. The protease activity is required for proteolytic activation of ATG8 family proteins: cleaves the C-terminal amino acid of ATG8 proteins to reveal a C-terminal glycine (By similarity). Exposure of the glycine at the C-terminus is essential for ATG8 proteins conjugation to phosphatidylethanolamine (PE) and insertion to membranes, which is necessary for autophagy. In addition to the protease activity, also mediates delipidation of PE-conjugated ATG8 proteins (By similarity).</text>
</comment>
<comment type="catalytic activity">
    <reaction evidence="3">
        <text>[protein]-C-terminal L-amino acid-glycyl-phosphatidylethanolamide + H2O = [protein]-C-terminal L-amino acid-glycine + a 1,2-diacyl-sn-glycero-3-phosphoethanolamine</text>
        <dbReference type="Rhea" id="RHEA:67548"/>
        <dbReference type="Rhea" id="RHEA-COMP:17323"/>
        <dbReference type="Rhea" id="RHEA-COMP:17324"/>
        <dbReference type="ChEBI" id="CHEBI:15377"/>
        <dbReference type="ChEBI" id="CHEBI:64612"/>
        <dbReference type="ChEBI" id="CHEBI:172940"/>
        <dbReference type="ChEBI" id="CHEBI:172941"/>
    </reaction>
    <physiologicalReaction direction="left-to-right" evidence="3">
        <dbReference type="Rhea" id="RHEA:67549"/>
    </physiologicalReaction>
</comment>
<comment type="subunit">
    <text evidence="5">Interacts with ATG8a and ATG8d.</text>
</comment>
<comment type="subcellular location">
    <subcellularLocation>
        <location evidence="2">Cytoplasm</location>
    </subcellularLocation>
</comment>
<comment type="alternative products">
    <event type="alternative splicing"/>
    <isoform>
        <id>Q9M1Y0-1</id>
        <name>1</name>
        <sequence type="displayed"/>
    </isoform>
    <isoform>
        <id>Q9M1Y0-2</id>
        <name>2</name>
        <sequence type="described" ref="VSP_025233 VSP_025234 VSP_025235"/>
    </isoform>
</comment>
<comment type="tissue specificity">
    <text evidence="6">Constitutively expressed.</text>
</comment>
<comment type="miscellaneous">
    <molecule>Isoform 2</molecule>
    <text evidence="9">May be due to intron retention.</text>
</comment>
<comment type="similarity">
    <text evidence="9">Belongs to the peptidase C54 family.</text>
</comment>
<feature type="chain" id="PRO_0000286899" description="Cysteine protease ATG4b">
    <location>
        <begin position="1"/>
        <end position="477"/>
    </location>
</feature>
<feature type="region of interest" description="Disordered" evidence="4">
    <location>
        <begin position="11"/>
        <end position="39"/>
    </location>
</feature>
<feature type="region of interest" description="Disordered" evidence="4">
    <location>
        <begin position="453"/>
        <end position="477"/>
    </location>
</feature>
<feature type="compositionally biased region" description="Polar residues" evidence="4">
    <location>
        <begin position="25"/>
        <end position="39"/>
    </location>
</feature>
<feature type="compositionally biased region" description="Low complexity" evidence="4">
    <location>
        <begin position="454"/>
        <end position="465"/>
    </location>
</feature>
<feature type="active site" description="Nucleophile" evidence="3">
    <location>
        <position position="173"/>
    </location>
</feature>
<feature type="active site" evidence="3">
    <location>
        <position position="368"/>
    </location>
</feature>
<feature type="active site" evidence="3">
    <location>
        <position position="370"/>
    </location>
</feature>
<feature type="splice variant" id="VSP_025233" description="In isoform 2." evidence="8">
    <location>
        <begin position="1"/>
        <end position="86"/>
    </location>
</feature>
<feature type="splice variant" id="VSP_025234" description="In isoform 2." evidence="8">
    <original>YIPSLIATFTFPQSLGILGGKPGAS</original>
    <variation>FVTLSKRFLDDKCYRRQEFSFSFSS</variation>
    <location>
        <begin position="329"/>
        <end position="353"/>
    </location>
</feature>
<feature type="splice variant" id="VSP_025235" description="In isoform 2." evidence="8">
    <location>
        <begin position="354"/>
        <end position="477"/>
    </location>
</feature>
<accession>Q9M1Y0</accession>
<accession>Q570T6</accession>
<protein>
    <recommendedName>
        <fullName evidence="9">Cysteine protease ATG4b</fullName>
        <ecNumber evidence="3">3.4.22.-</ecNumber>
    </recommendedName>
    <alternativeName>
        <fullName>Autophagy-related protein 4 homolog b</fullName>
        <shortName evidence="7">AtAPG4b</shortName>
        <shortName evidence="7">Protein autophagy 4b</shortName>
    </alternativeName>
</protein>
<name>ATG4B_ARATH</name>
<sequence length="477" mass="52202">MKAICDRFVPSKCSSSSTSEKRDISSPTSLVSDSASSDNKSNLTLCSDVVASSSPVSQLCREASTSGHNPVCTTHSSWTVILKTASMASGAIRRFQDRVLGPSRTGISSSTSEIWLLGVCYKISEGESSEEADAGRVLAAFRQDFSSLILMTYRRGFEPIGDTTYTSDVNWGCMLRSGQMLFAQALLFQRLGRSWRKKDSEPADEKYLEILELFGDTEASAFSIHNLILAGESYGLAAGSWVGPYAVCRSWESLARKNKEETDDKHKSFSMAVHIVSGSEDGERGGAPILCIEDVTKTCLEFSEGETEWPPILLLVPLVLGLDRVNPRYIPSLIATFTFPQSLGILGGKPGASTYIVGVQEDKGFYLDPHDVQQVVTVKKENQDVDTSSYHCNTLRYVPLESLDPSLALGFYCQHKDDFDDFCIRATKLAGDSNGAPLFTVTQSHRRNDCGIAETSSSTETSTEISGEEHEDDWQLL</sequence>
<proteinExistence type="evidence at protein level"/>
<organism>
    <name type="scientific">Arabidopsis thaliana</name>
    <name type="common">Mouse-ear cress</name>
    <dbReference type="NCBI Taxonomy" id="3702"/>
    <lineage>
        <taxon>Eukaryota</taxon>
        <taxon>Viridiplantae</taxon>
        <taxon>Streptophyta</taxon>
        <taxon>Embryophyta</taxon>
        <taxon>Tracheophyta</taxon>
        <taxon>Spermatophyta</taxon>
        <taxon>Magnoliopsida</taxon>
        <taxon>eudicotyledons</taxon>
        <taxon>Gunneridae</taxon>
        <taxon>Pentapetalae</taxon>
        <taxon>rosids</taxon>
        <taxon>malvids</taxon>
        <taxon>Brassicales</taxon>
        <taxon>Brassicaceae</taxon>
        <taxon>Camelineae</taxon>
        <taxon>Arabidopsis</taxon>
    </lineage>
</organism>